<reference key="1">
    <citation type="journal article" date="2007" name="PLoS ONE">
        <title>Analysis of the neurotoxin complex genes in Clostridium botulinum A1-A4 and B1 strains: BoNT/A3, /Ba4 and /B1 clusters are located within plasmids.</title>
        <authorList>
            <person name="Smith T.J."/>
            <person name="Hill K.K."/>
            <person name="Foley B.T."/>
            <person name="Detter J.C."/>
            <person name="Munk A.C."/>
            <person name="Bruce D.C."/>
            <person name="Doggett N.A."/>
            <person name="Smith L.A."/>
            <person name="Marks J.D."/>
            <person name="Xie G."/>
            <person name="Brettin T.S."/>
        </authorList>
    </citation>
    <scope>NUCLEOTIDE SEQUENCE [LARGE SCALE GENOMIC DNA]</scope>
    <source>
        <strain>Loch Maree / Type A3</strain>
    </source>
</reference>
<evidence type="ECO:0000255" key="1">
    <source>
        <dbReference type="HAMAP-Rule" id="MF_00183"/>
    </source>
</evidence>
<proteinExistence type="inferred from homology"/>
<protein>
    <recommendedName>
        <fullName evidence="1">1-deoxy-D-xylulose 5-phosphate reductoisomerase</fullName>
        <shortName evidence="1">DXP reductoisomerase</shortName>
        <ecNumber evidence="1">1.1.1.267</ecNumber>
    </recommendedName>
    <alternativeName>
        <fullName evidence="1">1-deoxyxylulose-5-phosphate reductoisomerase</fullName>
    </alternativeName>
    <alternativeName>
        <fullName evidence="1">2-C-methyl-D-erythritol 4-phosphate synthase</fullName>
    </alternativeName>
</protein>
<keyword id="KW-0414">Isoprene biosynthesis</keyword>
<keyword id="KW-0464">Manganese</keyword>
<keyword id="KW-0479">Metal-binding</keyword>
<keyword id="KW-0521">NADP</keyword>
<keyword id="KW-0560">Oxidoreductase</keyword>
<comment type="function">
    <text evidence="1">Catalyzes the NADPH-dependent rearrangement and reduction of 1-deoxy-D-xylulose-5-phosphate (DXP) to 2-C-methyl-D-erythritol 4-phosphate (MEP).</text>
</comment>
<comment type="catalytic activity">
    <reaction evidence="1">
        <text>2-C-methyl-D-erythritol 4-phosphate + NADP(+) = 1-deoxy-D-xylulose 5-phosphate + NADPH + H(+)</text>
        <dbReference type="Rhea" id="RHEA:13717"/>
        <dbReference type="ChEBI" id="CHEBI:15378"/>
        <dbReference type="ChEBI" id="CHEBI:57783"/>
        <dbReference type="ChEBI" id="CHEBI:57792"/>
        <dbReference type="ChEBI" id="CHEBI:58262"/>
        <dbReference type="ChEBI" id="CHEBI:58349"/>
        <dbReference type="EC" id="1.1.1.267"/>
    </reaction>
    <physiologicalReaction direction="right-to-left" evidence="1">
        <dbReference type="Rhea" id="RHEA:13719"/>
    </physiologicalReaction>
</comment>
<comment type="cofactor">
    <cofactor evidence="1">
        <name>Mg(2+)</name>
        <dbReference type="ChEBI" id="CHEBI:18420"/>
    </cofactor>
    <cofactor evidence="1">
        <name>Mn(2+)</name>
        <dbReference type="ChEBI" id="CHEBI:29035"/>
    </cofactor>
</comment>
<comment type="pathway">
    <text evidence="1">Isoprenoid biosynthesis; isopentenyl diphosphate biosynthesis via DXP pathway; isopentenyl diphosphate from 1-deoxy-D-xylulose 5-phosphate: step 1/6.</text>
</comment>
<comment type="similarity">
    <text evidence="1">Belongs to the DXR family.</text>
</comment>
<name>DXR_CLOBM</name>
<dbReference type="EC" id="1.1.1.267" evidence="1"/>
<dbReference type="EMBL" id="CP000962">
    <property type="protein sequence ID" value="ACA53698.1"/>
    <property type="molecule type" value="Genomic_DNA"/>
</dbReference>
<dbReference type="RefSeq" id="WP_012341896.1">
    <property type="nucleotide sequence ID" value="NC_010520.1"/>
</dbReference>
<dbReference type="SMR" id="B1KWL5"/>
<dbReference type="KEGG" id="cbl:CLK_1802"/>
<dbReference type="HOGENOM" id="CLU_035714_4_0_9"/>
<dbReference type="UniPathway" id="UPA00056">
    <property type="reaction ID" value="UER00092"/>
</dbReference>
<dbReference type="GO" id="GO:0030604">
    <property type="term" value="F:1-deoxy-D-xylulose-5-phosphate reductoisomerase activity"/>
    <property type="evidence" value="ECO:0007669"/>
    <property type="project" value="UniProtKB-UniRule"/>
</dbReference>
<dbReference type="GO" id="GO:0030145">
    <property type="term" value="F:manganese ion binding"/>
    <property type="evidence" value="ECO:0007669"/>
    <property type="project" value="TreeGrafter"/>
</dbReference>
<dbReference type="GO" id="GO:0070402">
    <property type="term" value="F:NADPH binding"/>
    <property type="evidence" value="ECO:0007669"/>
    <property type="project" value="InterPro"/>
</dbReference>
<dbReference type="GO" id="GO:0051484">
    <property type="term" value="P:isopentenyl diphosphate biosynthetic process, methylerythritol 4-phosphate pathway involved in terpenoid biosynthetic process"/>
    <property type="evidence" value="ECO:0007669"/>
    <property type="project" value="TreeGrafter"/>
</dbReference>
<dbReference type="FunFam" id="3.40.50.720:FF:000045">
    <property type="entry name" value="1-deoxy-D-xylulose 5-phosphate reductoisomerase"/>
    <property type="match status" value="1"/>
</dbReference>
<dbReference type="Gene3D" id="1.10.1740.10">
    <property type="match status" value="1"/>
</dbReference>
<dbReference type="Gene3D" id="3.40.50.720">
    <property type="entry name" value="NAD(P)-binding Rossmann-like Domain"/>
    <property type="match status" value="1"/>
</dbReference>
<dbReference type="HAMAP" id="MF_00183">
    <property type="entry name" value="DXP_reductoisom"/>
    <property type="match status" value="1"/>
</dbReference>
<dbReference type="InterPro" id="IPR003821">
    <property type="entry name" value="DXP_reductoisomerase"/>
</dbReference>
<dbReference type="InterPro" id="IPR013644">
    <property type="entry name" value="DXP_reductoisomerase_C"/>
</dbReference>
<dbReference type="InterPro" id="IPR013512">
    <property type="entry name" value="DXP_reductoisomerase_N"/>
</dbReference>
<dbReference type="InterPro" id="IPR026877">
    <property type="entry name" value="DXPR_C"/>
</dbReference>
<dbReference type="InterPro" id="IPR036169">
    <property type="entry name" value="DXPR_C_sf"/>
</dbReference>
<dbReference type="InterPro" id="IPR036291">
    <property type="entry name" value="NAD(P)-bd_dom_sf"/>
</dbReference>
<dbReference type="NCBIfam" id="TIGR00243">
    <property type="entry name" value="Dxr"/>
    <property type="match status" value="1"/>
</dbReference>
<dbReference type="NCBIfam" id="NF009114">
    <property type="entry name" value="PRK12464.1"/>
    <property type="match status" value="1"/>
</dbReference>
<dbReference type="PANTHER" id="PTHR30525">
    <property type="entry name" value="1-DEOXY-D-XYLULOSE 5-PHOSPHATE REDUCTOISOMERASE"/>
    <property type="match status" value="1"/>
</dbReference>
<dbReference type="PANTHER" id="PTHR30525:SF0">
    <property type="entry name" value="1-DEOXY-D-XYLULOSE 5-PHOSPHATE REDUCTOISOMERASE, CHLOROPLASTIC"/>
    <property type="match status" value="1"/>
</dbReference>
<dbReference type="Pfam" id="PF08436">
    <property type="entry name" value="DXP_redisom_C"/>
    <property type="match status" value="1"/>
</dbReference>
<dbReference type="Pfam" id="PF02670">
    <property type="entry name" value="DXP_reductoisom"/>
    <property type="match status" value="1"/>
</dbReference>
<dbReference type="Pfam" id="PF13288">
    <property type="entry name" value="DXPR_C"/>
    <property type="match status" value="1"/>
</dbReference>
<dbReference type="PIRSF" id="PIRSF006205">
    <property type="entry name" value="Dxp_reductismrs"/>
    <property type="match status" value="1"/>
</dbReference>
<dbReference type="SUPFAM" id="SSF69055">
    <property type="entry name" value="1-deoxy-D-xylulose-5-phosphate reductoisomerase, C-terminal domain"/>
    <property type="match status" value="1"/>
</dbReference>
<dbReference type="SUPFAM" id="SSF55347">
    <property type="entry name" value="Glyceraldehyde-3-phosphate dehydrogenase-like, C-terminal domain"/>
    <property type="match status" value="1"/>
</dbReference>
<dbReference type="SUPFAM" id="SSF51735">
    <property type="entry name" value="NAD(P)-binding Rossmann-fold domains"/>
    <property type="match status" value="1"/>
</dbReference>
<sequence>MKNITILGATGSIGTQTLDVIRKGNEELKLVAISANKSYKKVIEIIKEFKPKYAVLMEENAFKIVEDFCVDSKIDTKVLKGMEGMIYISTLEEINTVVTSVVGMIGLVPTIKAIESGKDIALANKETLVVAGELVISKAKEHNVNILPVDSEHGAIFQCLRGNKKEEVKNIIVTASGGPFRGKKKEELIDVKPEHALKHPKWNMGRKISIDSATLMNKGLEVIEAHFLFGVDYENIKVVVHPQSIVHSMVEYKDGSVIAQMATPDMKLPIQYALNYPNRKESQIEPLDFYKISNLTFEKPDMDTFLPLKLAYEAGKKGGVMPAILNGANEVAVDLFLKGKIEFLQIGDLLQECMNKFYKSMEATLENVISVDKEVREYLGKKYDI</sequence>
<gene>
    <name evidence="1" type="primary">dxr</name>
    <name type="ordered locus">CLK_1802</name>
</gene>
<organism>
    <name type="scientific">Clostridium botulinum (strain Loch Maree / Type A3)</name>
    <dbReference type="NCBI Taxonomy" id="498214"/>
    <lineage>
        <taxon>Bacteria</taxon>
        <taxon>Bacillati</taxon>
        <taxon>Bacillota</taxon>
        <taxon>Clostridia</taxon>
        <taxon>Eubacteriales</taxon>
        <taxon>Clostridiaceae</taxon>
        <taxon>Clostridium</taxon>
    </lineage>
</organism>
<accession>B1KWL5</accession>
<feature type="chain" id="PRO_1000098489" description="1-deoxy-D-xylulose 5-phosphate reductoisomerase">
    <location>
        <begin position="1"/>
        <end position="385"/>
    </location>
</feature>
<feature type="binding site" evidence="1">
    <location>
        <position position="10"/>
    </location>
    <ligand>
        <name>NADPH</name>
        <dbReference type="ChEBI" id="CHEBI:57783"/>
    </ligand>
</feature>
<feature type="binding site" evidence="1">
    <location>
        <position position="11"/>
    </location>
    <ligand>
        <name>NADPH</name>
        <dbReference type="ChEBI" id="CHEBI:57783"/>
    </ligand>
</feature>
<feature type="binding site" evidence="1">
    <location>
        <position position="12"/>
    </location>
    <ligand>
        <name>NADPH</name>
        <dbReference type="ChEBI" id="CHEBI:57783"/>
    </ligand>
</feature>
<feature type="binding site" evidence="1">
    <location>
        <position position="13"/>
    </location>
    <ligand>
        <name>NADPH</name>
        <dbReference type="ChEBI" id="CHEBI:57783"/>
    </ligand>
</feature>
<feature type="binding site" evidence="1">
    <location>
        <position position="37"/>
    </location>
    <ligand>
        <name>NADPH</name>
        <dbReference type="ChEBI" id="CHEBI:57783"/>
    </ligand>
</feature>
<feature type="binding site" evidence="1">
    <location>
        <position position="124"/>
    </location>
    <ligand>
        <name>NADPH</name>
        <dbReference type="ChEBI" id="CHEBI:57783"/>
    </ligand>
</feature>
<feature type="binding site" evidence="1">
    <location>
        <position position="125"/>
    </location>
    <ligand>
        <name>1-deoxy-D-xylulose 5-phosphate</name>
        <dbReference type="ChEBI" id="CHEBI:57792"/>
    </ligand>
</feature>
<feature type="binding site" evidence="1">
    <location>
        <position position="126"/>
    </location>
    <ligand>
        <name>NADPH</name>
        <dbReference type="ChEBI" id="CHEBI:57783"/>
    </ligand>
</feature>
<feature type="binding site" evidence="1">
    <location>
        <position position="150"/>
    </location>
    <ligand>
        <name>Mn(2+)</name>
        <dbReference type="ChEBI" id="CHEBI:29035"/>
    </ligand>
</feature>
<feature type="binding site" evidence="1">
    <location>
        <position position="151"/>
    </location>
    <ligand>
        <name>1-deoxy-D-xylulose 5-phosphate</name>
        <dbReference type="ChEBI" id="CHEBI:57792"/>
    </ligand>
</feature>
<feature type="binding site" evidence="1">
    <location>
        <position position="152"/>
    </location>
    <ligand>
        <name>1-deoxy-D-xylulose 5-phosphate</name>
        <dbReference type="ChEBI" id="CHEBI:57792"/>
    </ligand>
</feature>
<feature type="binding site" evidence="1">
    <location>
        <position position="152"/>
    </location>
    <ligand>
        <name>Mn(2+)</name>
        <dbReference type="ChEBI" id="CHEBI:29035"/>
    </ligand>
</feature>
<feature type="binding site" evidence="1">
    <location>
        <position position="176"/>
    </location>
    <ligand>
        <name>1-deoxy-D-xylulose 5-phosphate</name>
        <dbReference type="ChEBI" id="CHEBI:57792"/>
    </ligand>
</feature>
<feature type="binding site" evidence="1">
    <location>
        <position position="199"/>
    </location>
    <ligand>
        <name>1-deoxy-D-xylulose 5-phosphate</name>
        <dbReference type="ChEBI" id="CHEBI:57792"/>
    </ligand>
</feature>
<feature type="binding site" evidence="1">
    <location>
        <position position="205"/>
    </location>
    <ligand>
        <name>NADPH</name>
        <dbReference type="ChEBI" id="CHEBI:57783"/>
    </ligand>
</feature>
<feature type="binding site" evidence="1">
    <location>
        <position position="212"/>
    </location>
    <ligand>
        <name>1-deoxy-D-xylulose 5-phosphate</name>
        <dbReference type="ChEBI" id="CHEBI:57792"/>
    </ligand>
</feature>
<feature type="binding site" evidence="1">
    <location>
        <position position="217"/>
    </location>
    <ligand>
        <name>1-deoxy-D-xylulose 5-phosphate</name>
        <dbReference type="ChEBI" id="CHEBI:57792"/>
    </ligand>
</feature>
<feature type="binding site" evidence="1">
    <location>
        <position position="218"/>
    </location>
    <ligand>
        <name>1-deoxy-D-xylulose 5-phosphate</name>
        <dbReference type="ChEBI" id="CHEBI:57792"/>
    </ligand>
</feature>
<feature type="binding site" evidence="1">
    <location>
        <position position="221"/>
    </location>
    <ligand>
        <name>1-deoxy-D-xylulose 5-phosphate</name>
        <dbReference type="ChEBI" id="CHEBI:57792"/>
    </ligand>
</feature>
<feature type="binding site" evidence="1">
    <location>
        <position position="221"/>
    </location>
    <ligand>
        <name>Mn(2+)</name>
        <dbReference type="ChEBI" id="CHEBI:29035"/>
    </ligand>
</feature>